<sequence>MSGRGKQGGKARAKAKSRSSRAGLQFPVGRVHRLLRKGNYAERVGAGAPVYLAAVLEYLTAEILELAGNAARDNKKTRIIPRHLQLAVRNDEELNKLLGGVTIAQGGVLPNIQAVLLPKKTESHKPGKNK</sequence>
<name>H2A2B_HUMAN</name>
<feature type="initiator methionine" description="Removed" evidence="8">
    <location>
        <position position="1"/>
    </location>
</feature>
<feature type="chain" id="PRO_0000227505" description="Histone H2A type 2-B">
    <location>
        <begin position="2"/>
        <end position="130"/>
    </location>
</feature>
<feature type="region of interest" description="Disordered" evidence="4">
    <location>
        <begin position="1"/>
        <end position="22"/>
    </location>
</feature>
<feature type="compositionally biased region" description="Basic residues" evidence="4">
    <location>
        <begin position="7"/>
        <end position="19"/>
    </location>
</feature>
<feature type="modified residue" description="N-acetylserine" evidence="8">
    <location>
        <position position="2"/>
    </location>
</feature>
<feature type="modified residue" description="Phosphoserine; by RPS6KA5" evidence="5">
    <location>
        <position position="2"/>
    </location>
</feature>
<feature type="modified residue" description="Citrulline; alternate" evidence="8">
    <location>
        <position position="4"/>
    </location>
</feature>
<feature type="modified residue" description="Symmetric dimethylarginine; by PRMT5; alternate" evidence="3">
    <location>
        <position position="4"/>
    </location>
</feature>
<feature type="modified residue" description="N6-(2-hydroxyisobutyryl)lysine" evidence="22">
    <location>
        <position position="6"/>
    </location>
</feature>
<feature type="modified residue" description="N6-(2-hydroxyisobutyryl)lysine; alternate" evidence="22">
    <location>
        <position position="10"/>
    </location>
</feature>
<feature type="modified residue" description="N6-(beta-hydroxybutyryl)lysine; alternate" evidence="24">
    <location>
        <position position="10"/>
    </location>
</feature>
<feature type="modified residue" description="N6-lactoyllysine; alternate" evidence="1">
    <location>
        <position position="10"/>
    </location>
</feature>
<feature type="modified residue" description="N6-succinyllysine; alternate" evidence="17">
    <location>
        <position position="10"/>
    </location>
</feature>
<feature type="modified residue" description="N6-(beta-hydroxybutyryl)lysine; alternate" evidence="24">
    <location>
        <position position="14"/>
    </location>
</feature>
<feature type="modified residue" description="N6-(2-hydroxyisobutyryl)lysine; alternate" evidence="22">
    <location>
        <position position="37"/>
    </location>
</feature>
<feature type="modified residue" description="N6-(beta-hydroxybutyryl)lysine; alternate" evidence="24">
    <location>
        <position position="37"/>
    </location>
</feature>
<feature type="modified residue" description="N6-crotonyllysine; alternate" evidence="16">
    <location>
        <position position="37"/>
    </location>
</feature>
<feature type="modified residue" description="N6-(2-hydroxyisobutyryl)lysine" evidence="22">
    <location>
        <position position="75"/>
    </location>
</feature>
<feature type="modified residue" description="N6-(2-hydroxyisobutyryl)lysine" evidence="22">
    <location>
        <position position="76"/>
    </location>
</feature>
<feature type="modified residue" description="N6-(2-hydroxyisobutyryl)lysine; alternate" evidence="22">
    <location>
        <position position="96"/>
    </location>
</feature>
<feature type="modified residue" description="N6-(beta-hydroxybutyryl)lysine; alternate" evidence="24">
    <location>
        <position position="96"/>
    </location>
</feature>
<feature type="modified residue" description="N6-glutaryllysine; alternate" evidence="25">
    <location>
        <position position="96"/>
    </location>
</feature>
<feature type="modified residue" description="N6-succinyllysine; alternate" evidence="17">
    <location>
        <position position="96"/>
    </location>
</feature>
<feature type="modified residue" description="N5-methylglutamine" evidence="21">
    <location>
        <position position="105"/>
    </location>
</feature>
<feature type="modified residue" description="N6-(2-hydroxyisobutyryl)lysine; alternate" evidence="22">
    <location>
        <position position="119"/>
    </location>
</feature>
<feature type="modified residue" description="N6-(beta-hydroxybutyryl)lysine; alternate" evidence="24">
    <location>
        <position position="119"/>
    </location>
</feature>
<feature type="modified residue" description="N6-crotonyllysine; alternate" evidence="16">
    <location>
        <position position="119"/>
    </location>
</feature>
<feature type="modified residue" description="N6-glutaryllysine; alternate" evidence="25">
    <location>
        <position position="119"/>
    </location>
</feature>
<feature type="modified residue" description="N6-crotonyllysine; alternate" evidence="16">
    <location>
        <position position="120"/>
    </location>
</feature>
<feature type="modified residue" description="N6-glutaryllysine; alternate" evidence="25">
    <location>
        <position position="120"/>
    </location>
</feature>
<feature type="modified residue" description="Phosphothreonine; by DCAF1" evidence="6 20">
    <location>
        <position position="121"/>
    </location>
</feature>
<feature type="cross-link" description="Glycyl lysine isopeptide (Lys-Gly) (interchain with G-Cter in ubiquitin); alternate" evidence="18 19">
    <location>
        <position position="14"/>
    </location>
</feature>
<feature type="cross-link" description="Glycyl lysine isopeptide (Lys-Gly) (interchain with G-Cter in ubiquitin)" evidence="18 19">
    <location>
        <position position="16"/>
    </location>
</feature>
<feature type="cross-link" description="Glycyl lysine isopeptide (Lys-Gly) (interchain with G-Cter in ubiquitin); alternate" evidence="7 9 10 23">
    <location>
        <position position="120"/>
    </location>
</feature>
<feature type="sequence variant" id="VAR_035802" description="In a breast cancer sample; somatic mutation." evidence="11">
    <original>A</original>
    <variation>T</variation>
    <location>
        <position position="53"/>
    </location>
</feature>
<feature type="mutagenesis site" description="Blocks the inhibition of transcription by RPS6KA5/MSK1." evidence="5">
    <original>S</original>
    <variation>A</variation>
    <location>
        <position position="2"/>
    </location>
</feature>
<organism>
    <name type="scientific">Homo sapiens</name>
    <name type="common">Human</name>
    <dbReference type="NCBI Taxonomy" id="9606"/>
    <lineage>
        <taxon>Eukaryota</taxon>
        <taxon>Metazoa</taxon>
        <taxon>Chordata</taxon>
        <taxon>Craniata</taxon>
        <taxon>Vertebrata</taxon>
        <taxon>Euteleostomi</taxon>
        <taxon>Mammalia</taxon>
        <taxon>Eutheria</taxon>
        <taxon>Euarchontoglires</taxon>
        <taxon>Primates</taxon>
        <taxon>Haplorrhini</taxon>
        <taxon>Catarrhini</taxon>
        <taxon>Hominidae</taxon>
        <taxon>Homo</taxon>
    </lineage>
</organism>
<keyword id="KW-0007">Acetylation</keyword>
<keyword id="KW-0158">Chromosome</keyword>
<keyword id="KW-0164">Citrullination</keyword>
<keyword id="KW-0238">DNA-binding</keyword>
<keyword id="KW-0379">Hydroxylation</keyword>
<keyword id="KW-1017">Isopeptide bond</keyword>
<keyword id="KW-0488">Methylation</keyword>
<keyword id="KW-0544">Nucleosome core</keyword>
<keyword id="KW-0539">Nucleus</keyword>
<keyword id="KW-0597">Phosphoprotein</keyword>
<keyword id="KW-1267">Proteomics identification</keyword>
<keyword id="KW-1185">Reference proteome</keyword>
<keyword id="KW-0832">Ubl conjugation</keyword>
<accession>Q8IUE6</accession>
<gene>
    <name evidence="27" type="primary">H2AC21</name>
    <name evidence="27" type="synonym">HIST2H2AB</name>
</gene>
<evidence type="ECO:0000250" key="1">
    <source>
        <dbReference type="UniProtKB" id="P0C0S5"/>
    </source>
</evidence>
<evidence type="ECO:0000250" key="2">
    <source>
        <dbReference type="UniProtKB" id="P22752"/>
    </source>
</evidence>
<evidence type="ECO:0000250" key="3">
    <source>
        <dbReference type="UniProtKB" id="Q64522"/>
    </source>
</evidence>
<evidence type="ECO:0000256" key="4">
    <source>
        <dbReference type="SAM" id="MobiDB-lite"/>
    </source>
</evidence>
<evidence type="ECO:0000269" key="5">
    <source>
    </source>
</evidence>
<evidence type="ECO:0000269" key="6">
    <source>
    </source>
</evidence>
<evidence type="ECO:0000269" key="7">
    <source>
    </source>
</evidence>
<evidence type="ECO:0000269" key="8">
    <source>
    </source>
</evidence>
<evidence type="ECO:0000269" key="9">
    <source>
    </source>
</evidence>
<evidence type="ECO:0000269" key="10">
    <source>
    </source>
</evidence>
<evidence type="ECO:0000269" key="11">
    <source>
    </source>
</evidence>
<evidence type="ECO:0000269" key="12">
    <source>
    </source>
</evidence>
<evidence type="ECO:0000269" key="13">
    <source>
    </source>
</evidence>
<evidence type="ECO:0000269" key="14">
    <source>
    </source>
</evidence>
<evidence type="ECO:0000269" key="15">
    <source>
    </source>
</evidence>
<evidence type="ECO:0000269" key="16">
    <source>
    </source>
</evidence>
<evidence type="ECO:0000269" key="17">
    <source>
    </source>
</evidence>
<evidence type="ECO:0000269" key="18">
    <source>
    </source>
</evidence>
<evidence type="ECO:0000269" key="19">
    <source>
    </source>
</evidence>
<evidence type="ECO:0000269" key="20">
    <source>
    </source>
</evidence>
<evidence type="ECO:0000269" key="21">
    <source>
    </source>
</evidence>
<evidence type="ECO:0000269" key="22">
    <source>
    </source>
</evidence>
<evidence type="ECO:0000269" key="23">
    <source>
    </source>
</evidence>
<evidence type="ECO:0000269" key="24">
    <source>
    </source>
</evidence>
<evidence type="ECO:0000269" key="25">
    <source>
    </source>
</evidence>
<evidence type="ECO:0000305" key="26"/>
<evidence type="ECO:0000312" key="27">
    <source>
        <dbReference type="HGNC" id="HGNC:20508"/>
    </source>
</evidence>
<protein>
    <recommendedName>
        <fullName>Histone H2A type 2-B</fullName>
    </recommendedName>
    <alternativeName>
        <fullName evidence="27">H2A-clustered histone 21</fullName>
    </alternativeName>
</protein>
<dbReference type="EMBL" id="AY131972">
    <property type="protein sequence ID" value="AAN59958.1"/>
    <property type="molecule type" value="Genomic_DNA"/>
</dbReference>
<dbReference type="EMBL" id="AL591493">
    <property type="protein sequence ID" value="CAI12570.1"/>
    <property type="molecule type" value="Genomic_DNA"/>
</dbReference>
<dbReference type="CCDS" id="CCDS938.1"/>
<dbReference type="RefSeq" id="NP_778235.1">
    <property type="nucleotide sequence ID" value="NM_175065.3"/>
</dbReference>
<dbReference type="EMDB" id="EMD-4711"/>
<dbReference type="SMR" id="Q8IUE6"/>
<dbReference type="BioGRID" id="130469">
    <property type="interactions" value="276"/>
</dbReference>
<dbReference type="FunCoup" id="Q8IUE6">
    <property type="interactions" value="1066"/>
</dbReference>
<dbReference type="IntAct" id="Q8IUE6">
    <property type="interactions" value="144"/>
</dbReference>
<dbReference type="MINT" id="Q8IUE6"/>
<dbReference type="STRING" id="9606.ENSP00000332790"/>
<dbReference type="GlyGen" id="Q8IUE6">
    <property type="glycosylation" value="1 site, 1 O-linked glycan (1 site)"/>
</dbReference>
<dbReference type="iPTMnet" id="Q8IUE6"/>
<dbReference type="PhosphoSitePlus" id="Q8IUE6"/>
<dbReference type="SwissPalm" id="Q8IUE6"/>
<dbReference type="BioMuta" id="HIST2H2AB"/>
<dbReference type="DMDM" id="74750623"/>
<dbReference type="jPOST" id="Q8IUE6"/>
<dbReference type="MassIVE" id="Q8IUE6"/>
<dbReference type="PaxDb" id="9606-ENSP00000332790"/>
<dbReference type="PeptideAtlas" id="Q8IUE6"/>
<dbReference type="ProteomicsDB" id="70556"/>
<dbReference type="Pumba" id="Q8IUE6"/>
<dbReference type="TopDownProteomics" id="Q8IUE6"/>
<dbReference type="Antibodypedia" id="68019">
    <property type="antibodies" value="53 antibodies from 10 providers"/>
</dbReference>
<dbReference type="DNASU" id="317772"/>
<dbReference type="Ensembl" id="ENST00000331128.6">
    <property type="protein sequence ID" value="ENSP00000332790.4"/>
    <property type="gene ID" value="ENSG00000184270.6"/>
</dbReference>
<dbReference type="GeneID" id="317772"/>
<dbReference type="KEGG" id="hsa:317772"/>
<dbReference type="MANE-Select" id="ENST00000331128.6">
    <property type="protein sequence ID" value="ENSP00000332790.4"/>
    <property type="RefSeq nucleotide sequence ID" value="NM_175065.3"/>
    <property type="RefSeq protein sequence ID" value="NP_778235.1"/>
</dbReference>
<dbReference type="UCSC" id="uc001ete.4">
    <property type="organism name" value="human"/>
</dbReference>
<dbReference type="AGR" id="HGNC:20508"/>
<dbReference type="CTD" id="317772"/>
<dbReference type="GeneCards" id="H2AC21"/>
<dbReference type="HGNC" id="HGNC:20508">
    <property type="gene designation" value="H2AC21"/>
</dbReference>
<dbReference type="HPA" id="ENSG00000184270">
    <property type="expression patterns" value="Tissue enriched (bone)"/>
</dbReference>
<dbReference type="MIM" id="615014">
    <property type="type" value="gene"/>
</dbReference>
<dbReference type="neXtProt" id="NX_Q8IUE6"/>
<dbReference type="OpenTargets" id="ENSG00000184270"/>
<dbReference type="VEuPathDB" id="HostDB:ENSG00000184270"/>
<dbReference type="eggNOG" id="KOG1756">
    <property type="taxonomic scope" value="Eukaryota"/>
</dbReference>
<dbReference type="GeneTree" id="ENSGT00940000153118"/>
<dbReference type="HOGENOM" id="CLU_062828_3_1_1"/>
<dbReference type="InParanoid" id="Q8IUE6"/>
<dbReference type="OMA" id="XTRIIPR"/>
<dbReference type="OrthoDB" id="9445682at2759"/>
<dbReference type="PAN-GO" id="Q8IUE6">
    <property type="GO annotations" value="1 GO annotation based on evolutionary models"/>
</dbReference>
<dbReference type="PhylomeDB" id="Q8IUE6"/>
<dbReference type="TreeFam" id="TF300137"/>
<dbReference type="PathwayCommons" id="Q8IUE6"/>
<dbReference type="Reactome" id="R-HSA-3214815">
    <property type="pathway name" value="HDACs deacetylate histones"/>
</dbReference>
<dbReference type="Reactome" id="R-HSA-3214847">
    <property type="pathway name" value="HATs acetylate histones"/>
</dbReference>
<dbReference type="Reactome" id="R-HSA-3214858">
    <property type="pathway name" value="RMTs methylate histone arginines"/>
</dbReference>
<dbReference type="Reactome" id="R-HSA-5689603">
    <property type="pathway name" value="UCH proteinases"/>
</dbReference>
<dbReference type="Reactome" id="R-HSA-5689880">
    <property type="pathway name" value="Ub-specific processing proteases"/>
</dbReference>
<dbReference type="Reactome" id="R-HSA-5689901">
    <property type="pathway name" value="Metalloprotease DUBs"/>
</dbReference>
<dbReference type="Reactome" id="R-HSA-9609690">
    <property type="pathway name" value="HCMV Early Events"/>
</dbReference>
<dbReference type="Reactome" id="R-HSA-9610379">
    <property type="pathway name" value="HCMV Late Events"/>
</dbReference>
<dbReference type="SignaLink" id="Q8IUE6"/>
<dbReference type="SIGNOR" id="Q8IUE6"/>
<dbReference type="BioGRID-ORCS" id="317772">
    <property type="hits" value="28 hits in 1140 CRISPR screens"/>
</dbReference>
<dbReference type="CD-CODE" id="91857CE7">
    <property type="entry name" value="Nucleolus"/>
</dbReference>
<dbReference type="GeneWiki" id="HIST2H2AB"/>
<dbReference type="GenomeRNAi" id="317772"/>
<dbReference type="Pharos" id="Q8IUE6">
    <property type="development level" value="Tbio"/>
</dbReference>
<dbReference type="PRO" id="PR:Q8IUE6"/>
<dbReference type="Proteomes" id="UP000005640">
    <property type="component" value="Chromosome 1"/>
</dbReference>
<dbReference type="RNAct" id="Q8IUE6">
    <property type="molecule type" value="protein"/>
</dbReference>
<dbReference type="Bgee" id="ENSG00000184270">
    <property type="expression patterns" value="Expressed in calcaneal tendon and 92 other cell types or tissues"/>
</dbReference>
<dbReference type="GO" id="GO:0070062">
    <property type="term" value="C:extracellular exosome"/>
    <property type="evidence" value="ECO:0007005"/>
    <property type="project" value="UniProtKB"/>
</dbReference>
<dbReference type="GO" id="GO:0000786">
    <property type="term" value="C:nucleosome"/>
    <property type="evidence" value="ECO:0000318"/>
    <property type="project" value="GO_Central"/>
</dbReference>
<dbReference type="GO" id="GO:0005634">
    <property type="term" value="C:nucleus"/>
    <property type="evidence" value="ECO:0007005"/>
    <property type="project" value="UniProtKB"/>
</dbReference>
<dbReference type="GO" id="GO:0003677">
    <property type="term" value="F:DNA binding"/>
    <property type="evidence" value="ECO:0007669"/>
    <property type="project" value="UniProtKB-KW"/>
</dbReference>
<dbReference type="GO" id="GO:0046982">
    <property type="term" value="F:protein heterodimerization activity"/>
    <property type="evidence" value="ECO:0007669"/>
    <property type="project" value="InterPro"/>
</dbReference>
<dbReference type="GO" id="GO:0030527">
    <property type="term" value="F:structural constituent of chromatin"/>
    <property type="evidence" value="ECO:0000318"/>
    <property type="project" value="GO_Central"/>
</dbReference>
<dbReference type="GO" id="GO:0031507">
    <property type="term" value="P:heterochromatin formation"/>
    <property type="evidence" value="ECO:0000318"/>
    <property type="project" value="GO_Central"/>
</dbReference>
<dbReference type="CDD" id="cd00074">
    <property type="entry name" value="HFD_H2A"/>
    <property type="match status" value="1"/>
</dbReference>
<dbReference type="FunFam" id="1.10.20.10:FF:000004">
    <property type="entry name" value="Histone H2A"/>
    <property type="match status" value="1"/>
</dbReference>
<dbReference type="Gene3D" id="1.10.20.10">
    <property type="entry name" value="Histone, subunit A"/>
    <property type="match status" value="1"/>
</dbReference>
<dbReference type="InterPro" id="IPR009072">
    <property type="entry name" value="Histone-fold"/>
</dbReference>
<dbReference type="InterPro" id="IPR002119">
    <property type="entry name" value="Histone_H2A"/>
</dbReference>
<dbReference type="InterPro" id="IPR007125">
    <property type="entry name" value="Histone_H2A/H2B/H3"/>
</dbReference>
<dbReference type="InterPro" id="IPR032454">
    <property type="entry name" value="Histone_H2A_C"/>
</dbReference>
<dbReference type="InterPro" id="IPR032458">
    <property type="entry name" value="Histone_H2A_CS"/>
</dbReference>
<dbReference type="PANTHER" id="PTHR23430">
    <property type="entry name" value="HISTONE H2A"/>
    <property type="match status" value="1"/>
</dbReference>
<dbReference type="Pfam" id="PF00125">
    <property type="entry name" value="Histone"/>
    <property type="match status" value="1"/>
</dbReference>
<dbReference type="Pfam" id="PF16211">
    <property type="entry name" value="Histone_H2A_C"/>
    <property type="match status" value="1"/>
</dbReference>
<dbReference type="PRINTS" id="PR00620">
    <property type="entry name" value="HISTONEH2A"/>
</dbReference>
<dbReference type="SMART" id="SM00414">
    <property type="entry name" value="H2A"/>
    <property type="match status" value="1"/>
</dbReference>
<dbReference type="SUPFAM" id="SSF47113">
    <property type="entry name" value="Histone-fold"/>
    <property type="match status" value="1"/>
</dbReference>
<dbReference type="PROSITE" id="PS00046">
    <property type="entry name" value="HISTONE_H2A"/>
    <property type="match status" value="1"/>
</dbReference>
<comment type="function">
    <text>Core component of nucleosome. Nucleosomes wrap and compact DNA into chromatin, limiting DNA accessibility to the cellular machineries which require DNA as a template. Histones thereby play a central role in transcription regulation, DNA repair, DNA replication and chromosomal stability. DNA accessibility is regulated via a complex set of post-translational modifications of histones, also called histone code, and nucleosome remodeling.</text>
</comment>
<comment type="subunit">
    <text>The nucleosome is a histone octamer containing two molecules each of H2A, H2B, H3 and H4 assembled in one H3-H4 heterotetramer and two H2A-H2B heterodimers. The octamer wraps approximately 147 bp of DNA.</text>
</comment>
<comment type="interaction">
    <interactant intactId="EBI-1642157">
        <id>Q8IUE6</id>
    </interactant>
    <interactant intactId="EBI-725224">
        <id>P07305</id>
        <label>H1-0</label>
    </interactant>
    <organismsDiffer>false</organismsDiffer>
    <experiments>2</experiments>
</comment>
<comment type="interaction">
    <interactant intactId="EBI-1642157">
        <id>Q8IUE6</id>
    </interactant>
    <interactant intactId="EBI-932603">
        <id>Q02539</id>
        <label>H1-1</label>
    </interactant>
    <organismsDiffer>false</organismsDiffer>
    <experiments>3</experiments>
</comment>
<comment type="interaction">
    <interactant intactId="EBI-1642157">
        <id>Q8IUE6</id>
    </interactant>
    <interactant intactId="EBI-358372">
        <id>P16403</id>
        <label>H1-2</label>
    </interactant>
    <organismsDiffer>false</organismsDiffer>
    <experiments>2</experiments>
</comment>
<comment type="interaction">
    <interactant intactId="EBI-1642157">
        <id>Q8IUE6</id>
    </interactant>
    <interactant intactId="EBI-5327611">
        <id>P16401</id>
        <label>H1-5</label>
    </interactant>
    <organismsDiffer>false</organismsDiffer>
    <experiments>2</experiments>
</comment>
<comment type="interaction">
    <interactant intactId="EBI-1642157">
        <id>Q8IUE6</id>
    </interactant>
    <interactant intactId="EBI-746843">
        <id>P17096</id>
        <label>HMGA1</label>
    </interactant>
    <organismsDiffer>false</organismsDiffer>
    <experiments>3</experiments>
</comment>
<comment type="subcellular location">
    <subcellularLocation>
        <location>Nucleus</location>
    </subcellularLocation>
    <subcellularLocation>
        <location>Chromosome</location>
    </subcellularLocation>
</comment>
<comment type="PTM">
    <text evidence="8">Deiminated on Arg-4 in granulocytes upon calcium entry.</text>
</comment>
<comment type="PTM">
    <text evidence="7 9 10 12 13 14 15 18 19 21 23">Monoubiquitination of Lys-120 (H2AK119Ub) by RING1, TRIM37 and RNF2/RING2 complex gives a specific tag for epigenetic transcriptional repression and participates in X chromosome inactivation of female mammals. It is involved in the initiation of both imprinted and random X inactivation. Ubiquitinated H2A is enriched in inactive X chromosome chromatin. Ubiquitination of H2A functions downstream of methylation of 'Lys-27' of histone H3 (H3K27me). H2AK119Ub by RNF2/RING2 can also be induced by ultraviolet and may be involved in DNA repair. Monoubiquitination of Lys-120 (H2AK119Ub) by TRIM37 may promote transformation of cells in a number of breast cancers (PubMed:25470042). Following DNA double-strand breaks (DSBs), it is ubiquitinated through 'Lys-63' linkage of ubiquitin moieties by the E2 ligase UBE2N and the E3 ligases RNF8 and RNF168, leading to the recruitment of repair proteins to sites of DNA damage. Ubiquitination at Lys-14 and Lys-16 (H2AK13Ub and H2AK15Ub, respectively) in response to DNA damage is initiated by RNF168 that mediates monoubiquitination at these 2 sites, and 'Lys-63'-linked ubiquitin are then conjugated to monoubiquitin; RNF8 is able to extend 'Lys-63'-linked ubiquitin chains in vitro. Deubiquitinated by USP51 at Lys-14 and Lys-16 (H2AK13Ub and H2AK15Ub, respectively) after damaged DNA is repaired (PubMed:27083998). H2AK119Ub and ionizing radiation-induced 'Lys-63'-linked ubiquitination (H2AK13Ub and H2AK15Ub) are distinct events.</text>
</comment>
<comment type="PTM">
    <text evidence="5 6 8 20">Phosphorylation on Ser-2 (H2AS1ph) is enhanced during mitosis. Phosphorylation on Ser-2 by RPS6KA5/MSK1 directly represses transcription. Acetylation of H3 inhibits Ser-2 phosphorylation by RPS6KA5/MSK1. Phosphorylation at Thr-121 (H2AT120ph) by DCAF1 is present in the regulatory region of many tumor suppresor genes and down-regulates their transcription.</text>
</comment>
<comment type="PTM">
    <text evidence="2">Symmetric dimethylation on Arg-4 by the PRDM1/PRMT5 complex may play a crucial role in the germ-cell lineage.</text>
</comment>
<comment type="PTM">
    <text evidence="21">Glutamine methylation at Gln-105 (H2AQ104me) by FBL is specifically dedicated to polymerase I. It is present at 35S ribosomal DNA locus and impairs binding of the FACT complex (PubMed:24352239).</text>
</comment>
<comment type="PTM">
    <text evidence="16">Crotonylation (Kcr) is specifically present in male germ cells and marks testis-specific genes in post-meiotic cells, including X-linked genes that escape sex chromosome inactivation in haploid cells. Crotonylation marks active promoters and enhancers and confers resistance to transcriptional repressors. It is also associated with post-meiotically activated genes on autosomes.</text>
</comment>
<comment type="PTM">
    <text evidence="1">Lactylated in macrophages by EP300/P300 by using lactoyl-CoA directly derived from endogenous or exogenous lactate, leading to stimulates gene transcription.</text>
</comment>
<comment type="similarity">
    <text evidence="26">Belongs to the histone H2A family.</text>
</comment>
<reference key="1">
    <citation type="journal article" date="2002" name="Genomics">
        <title>The human and mouse replication-dependent histone genes.</title>
        <authorList>
            <person name="Marzluff W.F."/>
            <person name="Gongidi P."/>
            <person name="Woods K.R."/>
            <person name="Jin J."/>
            <person name="Maltais L.J."/>
        </authorList>
    </citation>
    <scope>NUCLEOTIDE SEQUENCE [GENOMIC DNA]</scope>
</reference>
<reference key="2">
    <citation type="journal article" date="2006" name="Nature">
        <title>The DNA sequence and biological annotation of human chromosome 1.</title>
        <authorList>
            <person name="Gregory S.G."/>
            <person name="Barlow K.F."/>
            <person name="McLay K.E."/>
            <person name="Kaul R."/>
            <person name="Swarbreck D."/>
            <person name="Dunham A."/>
            <person name="Scott C.E."/>
            <person name="Howe K.L."/>
            <person name="Woodfine K."/>
            <person name="Spencer C.C.A."/>
            <person name="Jones M.C."/>
            <person name="Gillson C."/>
            <person name="Searle S."/>
            <person name="Zhou Y."/>
            <person name="Kokocinski F."/>
            <person name="McDonald L."/>
            <person name="Evans R."/>
            <person name="Phillips K."/>
            <person name="Atkinson A."/>
            <person name="Cooper R."/>
            <person name="Jones C."/>
            <person name="Hall R.E."/>
            <person name="Andrews T.D."/>
            <person name="Lloyd C."/>
            <person name="Ainscough R."/>
            <person name="Almeida J.P."/>
            <person name="Ambrose K.D."/>
            <person name="Anderson F."/>
            <person name="Andrew R.W."/>
            <person name="Ashwell R.I.S."/>
            <person name="Aubin K."/>
            <person name="Babbage A.K."/>
            <person name="Bagguley C.L."/>
            <person name="Bailey J."/>
            <person name="Beasley H."/>
            <person name="Bethel G."/>
            <person name="Bird C.P."/>
            <person name="Bray-Allen S."/>
            <person name="Brown J.Y."/>
            <person name="Brown A.J."/>
            <person name="Buckley D."/>
            <person name="Burton J."/>
            <person name="Bye J."/>
            <person name="Carder C."/>
            <person name="Chapman J.C."/>
            <person name="Clark S.Y."/>
            <person name="Clarke G."/>
            <person name="Clee C."/>
            <person name="Cobley V."/>
            <person name="Collier R.E."/>
            <person name="Corby N."/>
            <person name="Coville G.J."/>
            <person name="Davies J."/>
            <person name="Deadman R."/>
            <person name="Dunn M."/>
            <person name="Earthrowl M."/>
            <person name="Ellington A.G."/>
            <person name="Errington H."/>
            <person name="Frankish A."/>
            <person name="Frankland J."/>
            <person name="French L."/>
            <person name="Garner P."/>
            <person name="Garnett J."/>
            <person name="Gay L."/>
            <person name="Ghori M.R.J."/>
            <person name="Gibson R."/>
            <person name="Gilby L.M."/>
            <person name="Gillett W."/>
            <person name="Glithero R.J."/>
            <person name="Grafham D.V."/>
            <person name="Griffiths C."/>
            <person name="Griffiths-Jones S."/>
            <person name="Grocock R."/>
            <person name="Hammond S."/>
            <person name="Harrison E.S.I."/>
            <person name="Hart E."/>
            <person name="Haugen E."/>
            <person name="Heath P.D."/>
            <person name="Holmes S."/>
            <person name="Holt K."/>
            <person name="Howden P.J."/>
            <person name="Hunt A.R."/>
            <person name="Hunt S.E."/>
            <person name="Hunter G."/>
            <person name="Isherwood J."/>
            <person name="James R."/>
            <person name="Johnson C."/>
            <person name="Johnson D."/>
            <person name="Joy A."/>
            <person name="Kay M."/>
            <person name="Kershaw J.K."/>
            <person name="Kibukawa M."/>
            <person name="Kimberley A.M."/>
            <person name="King A."/>
            <person name="Knights A.J."/>
            <person name="Lad H."/>
            <person name="Laird G."/>
            <person name="Lawlor S."/>
            <person name="Leongamornlert D.A."/>
            <person name="Lloyd D.M."/>
            <person name="Loveland J."/>
            <person name="Lovell J."/>
            <person name="Lush M.J."/>
            <person name="Lyne R."/>
            <person name="Martin S."/>
            <person name="Mashreghi-Mohammadi M."/>
            <person name="Matthews L."/>
            <person name="Matthews N.S.W."/>
            <person name="McLaren S."/>
            <person name="Milne S."/>
            <person name="Mistry S."/>
            <person name="Moore M.J.F."/>
            <person name="Nickerson T."/>
            <person name="O'Dell C.N."/>
            <person name="Oliver K."/>
            <person name="Palmeiri A."/>
            <person name="Palmer S.A."/>
            <person name="Parker A."/>
            <person name="Patel D."/>
            <person name="Pearce A.V."/>
            <person name="Peck A.I."/>
            <person name="Pelan S."/>
            <person name="Phelps K."/>
            <person name="Phillimore B.J."/>
            <person name="Plumb R."/>
            <person name="Rajan J."/>
            <person name="Raymond C."/>
            <person name="Rouse G."/>
            <person name="Saenphimmachak C."/>
            <person name="Sehra H.K."/>
            <person name="Sheridan E."/>
            <person name="Shownkeen R."/>
            <person name="Sims S."/>
            <person name="Skuce C.D."/>
            <person name="Smith M."/>
            <person name="Steward C."/>
            <person name="Subramanian S."/>
            <person name="Sycamore N."/>
            <person name="Tracey A."/>
            <person name="Tromans A."/>
            <person name="Van Helmond Z."/>
            <person name="Wall M."/>
            <person name="Wallis J.M."/>
            <person name="White S."/>
            <person name="Whitehead S.L."/>
            <person name="Wilkinson J.E."/>
            <person name="Willey D.L."/>
            <person name="Williams H."/>
            <person name="Wilming L."/>
            <person name="Wray P.W."/>
            <person name="Wu Z."/>
            <person name="Coulson A."/>
            <person name="Vaudin M."/>
            <person name="Sulston J.E."/>
            <person name="Durbin R.M."/>
            <person name="Hubbard T."/>
            <person name="Wooster R."/>
            <person name="Dunham I."/>
            <person name="Carter N.P."/>
            <person name="McVean G."/>
            <person name="Ross M.T."/>
            <person name="Harrow J."/>
            <person name="Olson M.V."/>
            <person name="Beck S."/>
            <person name="Rogers J."/>
            <person name="Bentley D.R."/>
        </authorList>
    </citation>
    <scope>NUCLEOTIDE SEQUENCE [LARGE SCALE GENOMIC DNA]</scope>
</reference>
<reference key="3">
    <citation type="journal article" date="2004" name="Genes Dev.">
        <title>Nucleosomal histone kinase-1 phosphorylates H2A Thr 119 during mitosis in the early Drosophila embryo.</title>
        <authorList>
            <person name="Aihara H."/>
            <person name="Nakagawa T."/>
            <person name="Yasui K."/>
            <person name="Ohta T."/>
            <person name="Hirose S."/>
            <person name="Dhomae N."/>
            <person name="Takio K."/>
            <person name="Kaneko M."/>
            <person name="Takeshima Y."/>
            <person name="Muramatsu M."/>
            <person name="Ito T."/>
        </authorList>
    </citation>
    <scope>PHOSPHORYLATION AT THR-121</scope>
</reference>
<reference key="4">
    <citation type="journal article" date="2004" name="J. Biol. Chem.">
        <title>Phosphorylation of histone H2A inhibits transcription on chromatin templates.</title>
        <authorList>
            <person name="Zhang Y."/>
            <person name="Griffin K."/>
            <person name="Mondal N."/>
            <person name="Parvin J.D."/>
        </authorList>
    </citation>
    <scope>PHOSPHORYLATION AT SER-2</scope>
    <scope>MUTAGENESIS OF SER-2</scope>
</reference>
<reference key="5">
    <citation type="journal article" date="2004" name="Nature">
        <title>Role of histone H2A ubiquitination in Polycomb silencing.</title>
        <authorList>
            <person name="Wang H."/>
            <person name="Wang L."/>
            <person name="Erdjument-Bromage H."/>
            <person name="Vidal M."/>
            <person name="Tempst P."/>
            <person name="Jones R.S."/>
            <person name="Zhang Y."/>
        </authorList>
    </citation>
    <scope>UBIQUITINATION AT LYS-120</scope>
</reference>
<reference key="6">
    <citation type="journal article" date="2005" name="Biochemistry">
        <title>Deimination of histone H2A and H4 at arginine 3 in HL-60 granulocytes.</title>
        <authorList>
            <person name="Hagiwara T."/>
            <person name="Hidaka Y."/>
            <person name="Yamada M."/>
        </authorList>
    </citation>
    <scope>ACETYLATION AT SER-2</scope>
    <scope>CITRULLINATION AT ARG-4</scope>
    <scope>IDENTIFICATION BY MASS SPECTROMETRY</scope>
</reference>
<reference key="7">
    <citation type="journal article" date="2005" name="Mol. Cell">
        <title>Role of Bmi-1 and Ring1A in H2A ubiquitylation and Hox gene silencing.</title>
        <authorList>
            <person name="Cao R."/>
            <person name="Tsukada Y."/>
            <person name="Zhang Y."/>
        </authorList>
    </citation>
    <scope>UBIQUITINATION AT LYS-120</scope>
</reference>
<reference key="8">
    <citation type="journal article" date="2006" name="Genes Dev.">
        <title>DNA damage triggers nucleotide excision repair-dependent monoubiquitylation of histone H2A.</title>
        <authorList>
            <person name="Bergink S."/>
            <person name="Salomons F.A."/>
            <person name="Hoogstraten D."/>
            <person name="Groothuis T.A.M."/>
            <person name="de Waard H."/>
            <person name="Wu J."/>
            <person name="Yuan L."/>
            <person name="Citterio E."/>
            <person name="Houtsmuller A.B."/>
            <person name="Neefjes J."/>
            <person name="Hoeijmakers J.H.J."/>
            <person name="Vermeulen W."/>
            <person name="Dantuma N.P."/>
        </authorList>
    </citation>
    <scope>UBIQUITINATION AT LYS-120</scope>
</reference>
<reference key="9">
    <citation type="journal article" date="2007" name="Cell">
        <title>RNF8 ubiquitylates histones at DNA double-strand breaks and promotes assembly of repair proteins.</title>
        <authorList>
            <person name="Mailand N."/>
            <person name="Bekker-Jensen S."/>
            <person name="Faustrup H."/>
            <person name="Melander F."/>
            <person name="Bartek J."/>
            <person name="Lukas C."/>
            <person name="Lukas J."/>
        </authorList>
    </citation>
    <scope>UBIQUITINATION</scope>
</reference>
<reference key="10">
    <citation type="journal article" date="2007" name="Cell">
        <title>RNF8 transduces the DNA-damage signal via histone ubiquitylation and checkpoint protein assembly.</title>
        <authorList>
            <person name="Huen M.S.Y."/>
            <person name="Grant R."/>
            <person name="Manke I."/>
            <person name="Minn K."/>
            <person name="Yu X."/>
            <person name="Yaffe M.B."/>
            <person name="Chen J."/>
        </authorList>
    </citation>
    <scope>UBIQUITINATION</scope>
</reference>
<reference key="11">
    <citation type="journal article" date="2009" name="Cell">
        <title>The RIDDLE syndrome protein mediates a ubiquitin-dependent signaling cascade at sites of DNA damage.</title>
        <authorList>
            <person name="Stewart G.S."/>
            <person name="Panier S."/>
            <person name="Townsend K."/>
            <person name="Al-Hakim A.K."/>
            <person name="Kolas N.K."/>
            <person name="Miller E.S."/>
            <person name="Nakada S."/>
            <person name="Ylanko J."/>
            <person name="Olivarius S."/>
            <person name="Mendez M."/>
            <person name="Oldreive C."/>
            <person name="Wildenhain J."/>
            <person name="Tagliaferro A."/>
            <person name="Pelletier L."/>
            <person name="Taubenheim N."/>
            <person name="Durandy A."/>
            <person name="Byrd P.J."/>
            <person name="Stankovic T."/>
            <person name="Taylor A.M.R."/>
            <person name="Durocher D."/>
        </authorList>
    </citation>
    <scope>UBIQUITINATION</scope>
</reference>
<reference key="12">
    <citation type="journal article" date="2009" name="Cell">
        <title>RNF168 binds and amplifies ubiquitin conjugates on damaged chromosomes to allow accumulation of repair proteins.</title>
        <authorList>
            <person name="Doil C."/>
            <person name="Mailand N."/>
            <person name="Bekker-Jensen S."/>
            <person name="Menard P."/>
            <person name="Larsen D.H."/>
            <person name="Pepperkok R."/>
            <person name="Ellenberg J."/>
            <person name="Panier S."/>
            <person name="Durocher D."/>
            <person name="Bartek J."/>
            <person name="Lukas J."/>
            <person name="Lukas C."/>
        </authorList>
    </citation>
    <scope>UBIQUITINATION</scope>
</reference>
<reference key="13">
    <citation type="journal article" date="2011" name="BMC Syst. Biol.">
        <title>Initial characterization of the human central proteome.</title>
        <authorList>
            <person name="Burkard T.R."/>
            <person name="Planyavsky M."/>
            <person name="Kaupe I."/>
            <person name="Breitwieser F.P."/>
            <person name="Buerckstuemmer T."/>
            <person name="Bennett K.L."/>
            <person name="Superti-Furga G."/>
            <person name="Colinge J."/>
        </authorList>
    </citation>
    <scope>IDENTIFICATION BY MASS SPECTROMETRY [LARGE SCALE ANALYSIS]</scope>
</reference>
<reference key="14">
    <citation type="journal article" date="2011" name="Cell">
        <title>Identification of 67 histone marks and histone lysine crotonylation as a new type of histone modification.</title>
        <authorList>
            <person name="Tan M."/>
            <person name="Luo H."/>
            <person name="Lee S."/>
            <person name="Jin F."/>
            <person name="Yang J.S."/>
            <person name="Montellier E."/>
            <person name="Buchou T."/>
            <person name="Cheng Z."/>
            <person name="Rousseaux S."/>
            <person name="Rajagopal N."/>
            <person name="Lu Z."/>
            <person name="Ye Z."/>
            <person name="Zhu Q."/>
            <person name="Wysocka J."/>
            <person name="Ye Y."/>
            <person name="Khochbin S."/>
            <person name="Ren B."/>
            <person name="Zhao Y."/>
        </authorList>
    </citation>
    <scope>CROTONYLATION AT LYS-37; LYS-119 AND LYS-120</scope>
</reference>
<reference key="15">
    <citation type="journal article" date="2012" name="Cell">
        <title>RNF168 ubiquitinates K13-15 on H2A/H2AX to drive DNA Damage signaling.</title>
        <authorList>
            <person name="Mattiroli F."/>
            <person name="Vissers J.H."/>
            <person name="van Dijk W.J."/>
            <person name="Ikpa P."/>
            <person name="Citterio E."/>
            <person name="Vermeulen W."/>
            <person name="Marteijn J.A."/>
            <person name="Sixma T.K."/>
        </authorList>
    </citation>
    <scope>UBIQUITINATION AT LYS-14 AND LYS-16 BY RNF168</scope>
</reference>
<reference key="16">
    <citation type="journal article" date="2012" name="Cell Cycle">
        <title>A novel ubiquitin mark at the N-terminal tail of histone H2As targeted by RNF168 ubiquitin ligase.</title>
        <authorList>
            <person name="Gatti M."/>
            <person name="Pinato S."/>
            <person name="Maspero E."/>
            <person name="Soffientini P."/>
            <person name="Polo S."/>
            <person name="Penengo L."/>
        </authorList>
    </citation>
    <scope>UBIQUITINATION AT LYS-14 AND LYS-16 BY RNF168</scope>
</reference>
<reference key="17">
    <citation type="journal article" date="2012" name="Mol. Cell. Proteomics">
        <title>Lysine succinylation and lysine malonylation in histones.</title>
        <authorList>
            <person name="Xie Z."/>
            <person name="Dai J."/>
            <person name="Dai L."/>
            <person name="Tan M."/>
            <person name="Cheng Z."/>
            <person name="Wu Y."/>
            <person name="Boeke J.D."/>
            <person name="Zhao Y."/>
        </authorList>
    </citation>
    <scope>SUCCINYLATION AT LYS-10 AND LYS-96</scope>
</reference>
<reference key="18">
    <citation type="journal article" date="2013" name="Mol. Cell">
        <title>VprBP has intrinsic kinase activity targeting histone H2A and represses gene transcription.</title>
        <authorList>
            <person name="Kim K."/>
            <person name="Kim J.M."/>
            <person name="Kim J.S."/>
            <person name="Choi J."/>
            <person name="Lee Y.S."/>
            <person name="Neamati N."/>
            <person name="Song J.S."/>
            <person name="Heo K."/>
            <person name="An W."/>
        </authorList>
    </citation>
    <scope>PHOSPHORYLATION AT THR-121</scope>
</reference>
<reference key="19">
    <citation type="journal article" date="2014" name="Nat. Chem. Biol.">
        <title>Lysine 2-hydroxyisobutyrylation is a widely distributed active histone mark.</title>
        <authorList>
            <person name="Dai L."/>
            <person name="Peng C."/>
            <person name="Montellier E."/>
            <person name="Lu Z."/>
            <person name="Chen Y."/>
            <person name="Ishii H."/>
            <person name="Debernardi A."/>
            <person name="Buchou T."/>
            <person name="Rousseaux S."/>
            <person name="Jin F."/>
            <person name="Sabari B.R."/>
            <person name="Deng Z."/>
            <person name="Allis C.D."/>
            <person name="Ren B."/>
            <person name="Khochbin S."/>
            <person name="Zhao Y."/>
        </authorList>
    </citation>
    <scope>HYDROXYBUTYRYLATION AT LYS-6; LYS-10; LYS-37; LYS-75; LYS-76; LYS-96 AND LYS-119</scope>
</reference>
<reference key="20">
    <citation type="journal article" date="2014" name="Nature">
        <title>Glutamine methylation in histone H2A is an RNA-polymerase-I-dedicated modification.</title>
        <authorList>
            <person name="Tessarz P."/>
            <person name="Santos-Rosa H."/>
            <person name="Robson S.C."/>
            <person name="Sylvestersen K.B."/>
            <person name="Nelson C.J."/>
            <person name="Nielsen M.L."/>
            <person name="Kouzarides T."/>
        </authorList>
    </citation>
    <scope>METHYLATION AT GLN-105</scope>
</reference>
<reference key="21">
    <citation type="journal article" date="2014" name="Nature">
        <title>TRIM37 is a new histone H2A ubiquitin ligase and breast cancer oncoprotein.</title>
        <authorList>
            <person name="Bhatnagar S."/>
            <person name="Gazin C."/>
            <person name="Chamberlain L."/>
            <person name="Ou J."/>
            <person name="Zhu X."/>
            <person name="Tushir J.S."/>
            <person name="Virbasius C.M."/>
            <person name="Lin L."/>
            <person name="Zhu L.J."/>
            <person name="Wajapeyee N."/>
            <person name="Green M.R."/>
        </authorList>
    </citation>
    <scope>UBIQUITINATION AT LYS-120</scope>
</reference>
<reference key="22">
    <citation type="journal article" date="2015" name="Proteomics">
        <title>N-terminome analysis of the human mitochondrial proteome.</title>
        <authorList>
            <person name="Vaca Jacome A.S."/>
            <person name="Rabilloud T."/>
            <person name="Schaeffer-Reiss C."/>
            <person name="Rompais M."/>
            <person name="Ayoub D."/>
            <person name="Lane L."/>
            <person name="Bairoch A."/>
            <person name="Van Dorsselaer A."/>
            <person name="Carapito C."/>
        </authorList>
    </citation>
    <scope>IDENTIFICATION BY MASS SPECTROMETRY [LARGE SCALE ANALYSIS]</scope>
</reference>
<reference key="23">
    <citation type="journal article" date="2016" name="Genes Dev.">
        <title>USP51 deubiquitylates H2AK13,15ub and regulates DNA damage response.</title>
        <authorList>
            <person name="Wang Z."/>
            <person name="Zhang H."/>
            <person name="Liu J."/>
            <person name="Cheruiyot A."/>
            <person name="Lee J.H."/>
            <person name="Ordog T."/>
            <person name="Lou Z."/>
            <person name="You Z."/>
            <person name="Zhang Z."/>
        </authorList>
    </citation>
    <scope>DEUBIQUITINATION AT LYS-14 AND LYS-16 BY USP51</scope>
</reference>
<reference key="24">
    <citation type="journal article" date="2016" name="Mol. Cell">
        <title>Metabolic regulation of gene expression by histone lysine beta-hydroxybutyrylation.</title>
        <authorList>
            <person name="Xie Z."/>
            <person name="Zhang D."/>
            <person name="Chung D."/>
            <person name="Tang Z."/>
            <person name="Huang H."/>
            <person name="Dai L."/>
            <person name="Qi S."/>
            <person name="Li J."/>
            <person name="Colak G."/>
            <person name="Chen Y."/>
            <person name="Xia C."/>
            <person name="Peng C."/>
            <person name="Ruan H."/>
            <person name="Kirkey M."/>
            <person name="Wang D."/>
            <person name="Jensen L.M."/>
            <person name="Kwon O.K."/>
            <person name="Lee S."/>
            <person name="Pletcher S.D."/>
            <person name="Tan M."/>
            <person name="Lombard D.B."/>
            <person name="White K.P."/>
            <person name="Zhao H."/>
            <person name="Li J."/>
            <person name="Roeder R.G."/>
            <person name="Yang X."/>
            <person name="Zhao Y."/>
        </authorList>
    </citation>
    <scope>HYDROXYBUTYRYLATION AT LYS-10; LYS-14; LYS-37; LYS-96 AND LYS-119</scope>
</reference>
<reference key="25">
    <citation type="journal article" date="2019" name="Mol. Cell">
        <title>Glutarylation of histone H4 lysine 91 regulates chromatin dynamics.</title>
        <authorList>
            <person name="Bao X."/>
            <person name="Liu Z."/>
            <person name="Zhang W."/>
            <person name="Gladysz K."/>
            <person name="Fung Y.M.E."/>
            <person name="Tian G."/>
            <person name="Xiong Y."/>
            <person name="Wong J.W.H."/>
            <person name="Yuen K.W.Y."/>
            <person name="Li X.D."/>
        </authorList>
    </citation>
    <scope>GLUTARYLATION AT LYS-96; LYS-119 AND LYS-120</scope>
</reference>
<reference key="26">
    <citation type="journal article" date="2006" name="Science">
        <title>The consensus coding sequences of human breast and colorectal cancers.</title>
        <authorList>
            <person name="Sjoeblom T."/>
            <person name="Jones S."/>
            <person name="Wood L.D."/>
            <person name="Parsons D.W."/>
            <person name="Lin J."/>
            <person name="Barber T.D."/>
            <person name="Mandelker D."/>
            <person name="Leary R.J."/>
            <person name="Ptak J."/>
            <person name="Silliman N."/>
            <person name="Szabo S."/>
            <person name="Buckhaults P."/>
            <person name="Farrell C."/>
            <person name="Meeh P."/>
            <person name="Markowitz S.D."/>
            <person name="Willis J."/>
            <person name="Dawson D."/>
            <person name="Willson J.K.V."/>
            <person name="Gazdar A.F."/>
            <person name="Hartigan J."/>
            <person name="Wu L."/>
            <person name="Liu C."/>
            <person name="Parmigiani G."/>
            <person name="Park B.H."/>
            <person name="Bachman K.E."/>
            <person name="Papadopoulos N."/>
            <person name="Vogelstein B."/>
            <person name="Kinzler K.W."/>
            <person name="Velculescu V.E."/>
        </authorList>
    </citation>
    <scope>VARIANT [LARGE SCALE ANALYSIS] THR-53</scope>
</reference>
<proteinExistence type="evidence at protein level"/>